<accession>P0CB79</accession>
<accession>Q5R5Z4</accession>
<proteinExistence type="inferred from homology"/>
<comment type="function">
    <text evidence="2">Accessory subunit of the mitochondrial membrane respiratory chain NADH dehydrogenase (Complex I), that is believed not to be involved in catalysis. Complex I functions in the transfer of electrons from NADH to the respiratory chain. The immediate electron acceptor for the enzyme is believed to be ubiquinone.</text>
</comment>
<comment type="subunit">
    <text evidence="2">Complex I is composed of 45 different subunits.</text>
</comment>
<comment type="subcellular location">
    <subcellularLocation>
        <location evidence="2">Mitochondrion inner membrane</location>
        <topology evidence="2">Peripheral membrane protein</topology>
        <orientation evidence="2">Matrix side</orientation>
    </subcellularLocation>
</comment>
<comment type="similarity">
    <text evidence="4">Belongs to the complex I NDUFA2 subunit family.</text>
</comment>
<keyword id="KW-0007">Acetylation</keyword>
<keyword id="KW-1015">Disulfide bond</keyword>
<keyword id="KW-0249">Electron transport</keyword>
<keyword id="KW-0472">Membrane</keyword>
<keyword id="KW-0496">Mitochondrion</keyword>
<keyword id="KW-0999">Mitochondrion inner membrane</keyword>
<keyword id="KW-1185">Reference proteome</keyword>
<keyword id="KW-0679">Respiratory chain</keyword>
<keyword id="KW-0813">Transport</keyword>
<organism>
    <name type="scientific">Pongo abelii</name>
    <name type="common">Sumatran orangutan</name>
    <name type="synonym">Pongo pygmaeus abelii</name>
    <dbReference type="NCBI Taxonomy" id="9601"/>
    <lineage>
        <taxon>Eukaryota</taxon>
        <taxon>Metazoa</taxon>
        <taxon>Chordata</taxon>
        <taxon>Craniata</taxon>
        <taxon>Vertebrata</taxon>
        <taxon>Euteleostomi</taxon>
        <taxon>Mammalia</taxon>
        <taxon>Eutheria</taxon>
        <taxon>Euarchontoglires</taxon>
        <taxon>Primates</taxon>
        <taxon>Haplorrhini</taxon>
        <taxon>Catarrhini</taxon>
        <taxon>Hominidae</taxon>
        <taxon>Pongo</taxon>
    </lineage>
</organism>
<feature type="initiator methionine" description="Removed" evidence="2">
    <location>
        <position position="1"/>
    </location>
</feature>
<feature type="chain" id="PRO_0000250208" description="NADH dehydrogenase [ubiquinone] 1 alpha subcomplex subunit 2">
    <location>
        <begin position="2"/>
        <end position="103"/>
    </location>
</feature>
<feature type="modified residue" description="N-acetylalanine" evidence="2">
    <location>
        <position position="2"/>
    </location>
</feature>
<feature type="modified residue" description="N6-acetyllysine; alternate" evidence="3">
    <location>
        <position position="64"/>
    </location>
</feature>
<feature type="modified residue" description="N6-succinyllysine; alternate" evidence="3">
    <location>
        <position position="64"/>
    </location>
</feature>
<feature type="modified residue" description="N6-acetyllysine" evidence="3">
    <location>
        <position position="75"/>
    </location>
</feature>
<feature type="disulfide bond" description="Redox-active" evidence="1">
    <location>
        <begin position="24"/>
        <end position="58"/>
    </location>
</feature>
<reference key="1">
    <citation type="submission" date="2004-11" db="EMBL/GenBank/DDBJ databases">
        <authorList>
            <consortium name="The German cDNA consortium"/>
        </authorList>
    </citation>
    <scope>NUCLEOTIDE SEQUENCE [LARGE SCALE MRNA]</scope>
    <source>
        <tissue>Brain cortex</tissue>
    </source>
</reference>
<sequence length="103" mass="11477">MAAAAASRGIGAKLGLREIRIHLCQRSPGSQGVRDFIEKRYVELKKANPDLPILIRECSDVQPKLWARYAFGQEKNVPLNNFSADQVTRALENVLKPEASTED</sequence>
<protein>
    <recommendedName>
        <fullName>NADH dehydrogenase [ubiquinone] 1 alpha subcomplex subunit 2</fullName>
    </recommendedName>
    <alternativeName>
        <fullName>Complex I-B8</fullName>
        <shortName>CI-B8</shortName>
    </alternativeName>
    <alternativeName>
        <fullName>NADH-ubiquinone oxidoreductase B8 subunit</fullName>
    </alternativeName>
</protein>
<dbReference type="EMBL" id="CR860706">
    <property type="protein sequence ID" value="CAH92822.1"/>
    <property type="molecule type" value="mRNA"/>
</dbReference>
<dbReference type="RefSeq" id="NP_001126649.1">
    <property type="nucleotide sequence ID" value="NM_001133177.1"/>
</dbReference>
<dbReference type="SMR" id="P0CB79"/>
<dbReference type="FunCoup" id="P0CB79">
    <property type="interactions" value="1368"/>
</dbReference>
<dbReference type="STRING" id="9601.ENSPPYP00000017734"/>
<dbReference type="Ensembl" id="ENSPPYT00000061441.1">
    <property type="protein sequence ID" value="ENSPPYP00000041387.1"/>
    <property type="gene ID" value="ENSPPYG00000036662.1"/>
</dbReference>
<dbReference type="GeneID" id="100173647"/>
<dbReference type="KEGG" id="pon:100173647"/>
<dbReference type="CTD" id="4695"/>
<dbReference type="eggNOG" id="KOG3446">
    <property type="taxonomic scope" value="Eukaryota"/>
</dbReference>
<dbReference type="GeneTree" id="ENSGT00390000006178"/>
<dbReference type="HOGENOM" id="CLU_110897_0_0_1"/>
<dbReference type="InParanoid" id="P0CB79"/>
<dbReference type="OMA" id="RIHLCQH"/>
<dbReference type="OrthoDB" id="10250268at2759"/>
<dbReference type="TreeFam" id="TF300229"/>
<dbReference type="Proteomes" id="UP000001595">
    <property type="component" value="Chromosome 5"/>
</dbReference>
<dbReference type="GO" id="GO:0005743">
    <property type="term" value="C:mitochondrial inner membrane"/>
    <property type="evidence" value="ECO:0007669"/>
    <property type="project" value="UniProtKB-SubCell"/>
</dbReference>
<dbReference type="GO" id="GO:0045271">
    <property type="term" value="C:respiratory chain complex I"/>
    <property type="evidence" value="ECO:0000250"/>
    <property type="project" value="UniProtKB"/>
</dbReference>
<dbReference type="FunFam" id="3.40.30.10:FF:000127">
    <property type="entry name" value="NADH dehydrogenase [ubiquinone] 1 alpha subcomplex subunit 2"/>
    <property type="match status" value="1"/>
</dbReference>
<dbReference type="Gene3D" id="3.40.30.10">
    <property type="entry name" value="Glutaredoxin"/>
    <property type="match status" value="1"/>
</dbReference>
<dbReference type="InterPro" id="IPR016464">
    <property type="entry name" value="NADH_Ub_cplx-1_asu_su-2"/>
</dbReference>
<dbReference type="InterPro" id="IPR007741">
    <property type="entry name" value="Ribosomal_mL43/mS25/NADH_DH"/>
</dbReference>
<dbReference type="InterPro" id="IPR036249">
    <property type="entry name" value="Thioredoxin-like_sf"/>
</dbReference>
<dbReference type="PANTHER" id="PTHR12878:SF0">
    <property type="entry name" value="NADH DEHYDROGENASE [UBIQUINONE] 1 ALPHA SUBCOMPLEX SUBUNIT 2"/>
    <property type="match status" value="1"/>
</dbReference>
<dbReference type="PANTHER" id="PTHR12878">
    <property type="entry name" value="NADH-UBIQUINONE OXIDOREDUCTASE B8 SUBUNIT"/>
    <property type="match status" value="1"/>
</dbReference>
<dbReference type="Pfam" id="PF05047">
    <property type="entry name" value="L51_S25_CI-B8"/>
    <property type="match status" value="1"/>
</dbReference>
<dbReference type="PIRSF" id="PIRSF005822">
    <property type="entry name" value="NDUA2"/>
    <property type="match status" value="1"/>
</dbReference>
<dbReference type="SMART" id="SM00916">
    <property type="entry name" value="L51_S25_CI-B8"/>
    <property type="match status" value="1"/>
</dbReference>
<dbReference type="SUPFAM" id="SSF52833">
    <property type="entry name" value="Thioredoxin-like"/>
    <property type="match status" value="1"/>
</dbReference>
<name>NDUA2_PONAB</name>
<evidence type="ECO:0000250" key="1"/>
<evidence type="ECO:0000250" key="2">
    <source>
        <dbReference type="UniProtKB" id="O43678"/>
    </source>
</evidence>
<evidence type="ECO:0000250" key="3">
    <source>
        <dbReference type="UniProtKB" id="Q9CQ75"/>
    </source>
</evidence>
<evidence type="ECO:0000305" key="4"/>
<gene>
    <name type="primary">NDUFA2</name>
</gene>